<proteinExistence type="inferred from homology"/>
<gene>
    <name evidence="1" type="primary">secB</name>
    <name type="ordered locus">Bxeno_A0284</name>
    <name type="ORF">Bxe_A4178</name>
</gene>
<name>SECB_PARXL</name>
<protein>
    <recommendedName>
        <fullName evidence="1">Protein-export protein SecB</fullName>
    </recommendedName>
</protein>
<keyword id="KW-0143">Chaperone</keyword>
<keyword id="KW-0963">Cytoplasm</keyword>
<keyword id="KW-0653">Protein transport</keyword>
<keyword id="KW-1185">Reference proteome</keyword>
<keyword id="KW-0811">Translocation</keyword>
<keyword id="KW-0813">Transport</keyword>
<feature type="chain" id="PRO_1000062469" description="Protein-export protein SecB">
    <location>
        <begin position="1"/>
        <end position="156"/>
    </location>
</feature>
<accession>Q146B7</accession>
<dbReference type="EMBL" id="CP000270">
    <property type="protein sequence ID" value="ABE28822.1"/>
    <property type="molecule type" value="Genomic_DNA"/>
</dbReference>
<dbReference type="RefSeq" id="WP_011486659.1">
    <property type="nucleotide sequence ID" value="NC_007951.1"/>
</dbReference>
<dbReference type="SMR" id="Q146B7"/>
<dbReference type="STRING" id="266265.Bxe_A4178"/>
<dbReference type="KEGG" id="bxb:DR64_1856"/>
<dbReference type="KEGG" id="bxe:Bxe_A4178"/>
<dbReference type="PATRIC" id="fig|266265.5.peg.301"/>
<dbReference type="eggNOG" id="COG1952">
    <property type="taxonomic scope" value="Bacteria"/>
</dbReference>
<dbReference type="OrthoDB" id="9795145at2"/>
<dbReference type="Proteomes" id="UP000001817">
    <property type="component" value="Chromosome 1"/>
</dbReference>
<dbReference type="GO" id="GO:0005737">
    <property type="term" value="C:cytoplasm"/>
    <property type="evidence" value="ECO:0007669"/>
    <property type="project" value="UniProtKB-SubCell"/>
</dbReference>
<dbReference type="GO" id="GO:0051082">
    <property type="term" value="F:unfolded protein binding"/>
    <property type="evidence" value="ECO:0007669"/>
    <property type="project" value="InterPro"/>
</dbReference>
<dbReference type="GO" id="GO:0006457">
    <property type="term" value="P:protein folding"/>
    <property type="evidence" value="ECO:0007669"/>
    <property type="project" value="UniProtKB-UniRule"/>
</dbReference>
<dbReference type="GO" id="GO:0051262">
    <property type="term" value="P:protein tetramerization"/>
    <property type="evidence" value="ECO:0007669"/>
    <property type="project" value="InterPro"/>
</dbReference>
<dbReference type="GO" id="GO:0015031">
    <property type="term" value="P:protein transport"/>
    <property type="evidence" value="ECO:0007669"/>
    <property type="project" value="UniProtKB-UniRule"/>
</dbReference>
<dbReference type="Gene3D" id="3.10.420.10">
    <property type="entry name" value="SecB-like"/>
    <property type="match status" value="1"/>
</dbReference>
<dbReference type="HAMAP" id="MF_00821">
    <property type="entry name" value="SecB"/>
    <property type="match status" value="1"/>
</dbReference>
<dbReference type="InterPro" id="IPR003708">
    <property type="entry name" value="SecB"/>
</dbReference>
<dbReference type="InterPro" id="IPR035958">
    <property type="entry name" value="SecB-like_sf"/>
</dbReference>
<dbReference type="NCBIfam" id="NF004392">
    <property type="entry name" value="PRK05751.1-3"/>
    <property type="match status" value="1"/>
</dbReference>
<dbReference type="NCBIfam" id="NF004394">
    <property type="entry name" value="PRK05751.1-5"/>
    <property type="match status" value="1"/>
</dbReference>
<dbReference type="NCBIfam" id="TIGR00809">
    <property type="entry name" value="secB"/>
    <property type="match status" value="1"/>
</dbReference>
<dbReference type="PANTHER" id="PTHR36918">
    <property type="match status" value="1"/>
</dbReference>
<dbReference type="PANTHER" id="PTHR36918:SF1">
    <property type="entry name" value="PROTEIN-EXPORT PROTEIN SECB"/>
    <property type="match status" value="1"/>
</dbReference>
<dbReference type="Pfam" id="PF02556">
    <property type="entry name" value="SecB"/>
    <property type="match status" value="1"/>
</dbReference>
<dbReference type="PRINTS" id="PR01594">
    <property type="entry name" value="SECBCHAPRONE"/>
</dbReference>
<dbReference type="SUPFAM" id="SSF54611">
    <property type="entry name" value="SecB-like"/>
    <property type="match status" value="1"/>
</dbReference>
<sequence length="156" mass="17232">MSDENNQPFFNIQRIYLKDMSLEQPNSPGIFLEQEMPSVEVEVDVKAERLAETVFEILVTGTVTAKVSDKVAFLIEAKQAGIFDIRNIPAEQIDPLVGIACPTILFPYLRSNIADAITRAGFPPIHLAEINFQALYEQRLAQMGGQDGAAQNGVTH</sequence>
<organism>
    <name type="scientific">Paraburkholderia xenovorans (strain LB400)</name>
    <dbReference type="NCBI Taxonomy" id="266265"/>
    <lineage>
        <taxon>Bacteria</taxon>
        <taxon>Pseudomonadati</taxon>
        <taxon>Pseudomonadota</taxon>
        <taxon>Betaproteobacteria</taxon>
        <taxon>Burkholderiales</taxon>
        <taxon>Burkholderiaceae</taxon>
        <taxon>Paraburkholderia</taxon>
    </lineage>
</organism>
<reference key="1">
    <citation type="journal article" date="2006" name="Proc. Natl. Acad. Sci. U.S.A.">
        <title>Burkholderia xenovorans LB400 harbors a multi-replicon, 9.73-Mbp genome shaped for versatility.</title>
        <authorList>
            <person name="Chain P.S.G."/>
            <person name="Denef V.J."/>
            <person name="Konstantinidis K.T."/>
            <person name="Vergez L.M."/>
            <person name="Agullo L."/>
            <person name="Reyes V.L."/>
            <person name="Hauser L."/>
            <person name="Cordova M."/>
            <person name="Gomez L."/>
            <person name="Gonzalez M."/>
            <person name="Land M."/>
            <person name="Lao V."/>
            <person name="Larimer F."/>
            <person name="LiPuma J.J."/>
            <person name="Mahenthiralingam E."/>
            <person name="Malfatti S.A."/>
            <person name="Marx C.J."/>
            <person name="Parnell J.J."/>
            <person name="Ramette A."/>
            <person name="Richardson P."/>
            <person name="Seeger M."/>
            <person name="Smith D."/>
            <person name="Spilker T."/>
            <person name="Sul W.J."/>
            <person name="Tsoi T.V."/>
            <person name="Ulrich L.E."/>
            <person name="Zhulin I.B."/>
            <person name="Tiedje J.M."/>
        </authorList>
    </citation>
    <scope>NUCLEOTIDE SEQUENCE [LARGE SCALE GENOMIC DNA]</scope>
    <source>
        <strain>LB400</strain>
    </source>
</reference>
<comment type="function">
    <text evidence="1">One of the proteins required for the normal export of preproteins out of the cell cytoplasm. It is a molecular chaperone that binds to a subset of precursor proteins, maintaining them in a translocation-competent state. It also specifically binds to its receptor SecA.</text>
</comment>
<comment type="subunit">
    <text evidence="1">Homotetramer, a dimer of dimers. One homotetramer interacts with 1 SecA dimer.</text>
</comment>
<comment type="subcellular location">
    <subcellularLocation>
        <location evidence="1">Cytoplasm</location>
    </subcellularLocation>
</comment>
<comment type="similarity">
    <text evidence="1">Belongs to the SecB family.</text>
</comment>
<evidence type="ECO:0000255" key="1">
    <source>
        <dbReference type="HAMAP-Rule" id="MF_00821"/>
    </source>
</evidence>